<organism>
    <name type="scientific">Anaeromyxobacter sp. (strain Fw109-5)</name>
    <dbReference type="NCBI Taxonomy" id="404589"/>
    <lineage>
        <taxon>Bacteria</taxon>
        <taxon>Pseudomonadati</taxon>
        <taxon>Myxococcota</taxon>
        <taxon>Myxococcia</taxon>
        <taxon>Myxococcales</taxon>
        <taxon>Cystobacterineae</taxon>
        <taxon>Anaeromyxobacteraceae</taxon>
        <taxon>Anaeromyxobacter</taxon>
    </lineage>
</organism>
<reference key="1">
    <citation type="journal article" date="2015" name="Genome Announc.">
        <title>Complete genome sequence of Anaeromyxobacter sp. Fw109-5, an anaerobic, metal-reducing bacterium isolated from a contaminated subsurface environment.</title>
        <authorList>
            <person name="Hwang C."/>
            <person name="Copeland A."/>
            <person name="Lucas S."/>
            <person name="Lapidus A."/>
            <person name="Barry K."/>
            <person name="Glavina Del Rio T."/>
            <person name="Dalin E."/>
            <person name="Tice H."/>
            <person name="Pitluck S."/>
            <person name="Sims D."/>
            <person name="Brettin T."/>
            <person name="Bruce D.C."/>
            <person name="Detter J.C."/>
            <person name="Han C.S."/>
            <person name="Schmutz J."/>
            <person name="Larimer F.W."/>
            <person name="Land M.L."/>
            <person name="Hauser L.J."/>
            <person name="Kyrpides N."/>
            <person name="Lykidis A."/>
            <person name="Richardson P."/>
            <person name="Belieav A."/>
            <person name="Sanford R.A."/>
            <person name="Loeffler F.E."/>
            <person name="Fields M.W."/>
        </authorList>
    </citation>
    <scope>NUCLEOTIDE SEQUENCE [LARGE SCALE GENOMIC DNA]</scope>
    <source>
        <strain>Fw109-5</strain>
    </source>
</reference>
<protein>
    <recommendedName>
        <fullName evidence="1">Ribosomal protein uS12 methylthiotransferase RimO</fullName>
        <shortName evidence="1">uS12 MTTase</shortName>
        <shortName evidence="1">uS12 methylthiotransferase</shortName>
        <ecNumber evidence="1">2.8.4.4</ecNumber>
    </recommendedName>
    <alternativeName>
        <fullName evidence="1">Ribosomal protein uS12 (aspartate-C(3))-methylthiotransferase</fullName>
    </alternativeName>
    <alternativeName>
        <fullName evidence="1">Ribosome maturation factor RimO</fullName>
    </alternativeName>
</protein>
<comment type="function">
    <text evidence="1">Catalyzes the methylthiolation of an aspartic acid residue of ribosomal protein uS12.</text>
</comment>
<comment type="catalytic activity">
    <reaction evidence="1">
        <text>L-aspartate(89)-[ribosomal protein uS12]-hydrogen + (sulfur carrier)-SH + AH2 + 2 S-adenosyl-L-methionine = 3-methylsulfanyl-L-aspartate(89)-[ribosomal protein uS12]-hydrogen + (sulfur carrier)-H + 5'-deoxyadenosine + L-methionine + A + S-adenosyl-L-homocysteine + 2 H(+)</text>
        <dbReference type="Rhea" id="RHEA:37087"/>
        <dbReference type="Rhea" id="RHEA-COMP:10460"/>
        <dbReference type="Rhea" id="RHEA-COMP:10461"/>
        <dbReference type="Rhea" id="RHEA-COMP:14737"/>
        <dbReference type="Rhea" id="RHEA-COMP:14739"/>
        <dbReference type="ChEBI" id="CHEBI:13193"/>
        <dbReference type="ChEBI" id="CHEBI:15378"/>
        <dbReference type="ChEBI" id="CHEBI:17319"/>
        <dbReference type="ChEBI" id="CHEBI:17499"/>
        <dbReference type="ChEBI" id="CHEBI:29917"/>
        <dbReference type="ChEBI" id="CHEBI:29961"/>
        <dbReference type="ChEBI" id="CHEBI:57844"/>
        <dbReference type="ChEBI" id="CHEBI:57856"/>
        <dbReference type="ChEBI" id="CHEBI:59789"/>
        <dbReference type="ChEBI" id="CHEBI:64428"/>
        <dbReference type="ChEBI" id="CHEBI:73599"/>
        <dbReference type="EC" id="2.8.4.4"/>
    </reaction>
</comment>
<comment type="cofactor">
    <cofactor evidence="1">
        <name>[4Fe-4S] cluster</name>
        <dbReference type="ChEBI" id="CHEBI:49883"/>
    </cofactor>
    <text evidence="1">Binds 2 [4Fe-4S] clusters. One cluster is coordinated with 3 cysteines and an exchangeable S-adenosyl-L-methionine.</text>
</comment>
<comment type="subcellular location">
    <subcellularLocation>
        <location evidence="1">Cytoplasm</location>
    </subcellularLocation>
</comment>
<comment type="similarity">
    <text evidence="1">Belongs to the methylthiotransferase family. RimO subfamily.</text>
</comment>
<feature type="chain" id="PRO_0000374699" description="Ribosomal protein uS12 methylthiotransferase RimO">
    <location>
        <begin position="1"/>
        <end position="470"/>
    </location>
</feature>
<feature type="domain" description="MTTase N-terminal" evidence="1">
    <location>
        <begin position="4"/>
        <end position="120"/>
    </location>
</feature>
<feature type="domain" description="Radical SAM core" evidence="2">
    <location>
        <begin position="141"/>
        <end position="371"/>
    </location>
</feature>
<feature type="domain" description="TRAM" evidence="1">
    <location>
        <begin position="374"/>
        <end position="442"/>
    </location>
</feature>
<feature type="region of interest" description="Disordered" evidence="3">
    <location>
        <begin position="447"/>
        <end position="470"/>
    </location>
</feature>
<feature type="binding site" evidence="1">
    <location>
        <position position="13"/>
    </location>
    <ligand>
        <name>[4Fe-4S] cluster</name>
        <dbReference type="ChEBI" id="CHEBI:49883"/>
        <label>1</label>
    </ligand>
</feature>
<feature type="binding site" evidence="1">
    <location>
        <position position="49"/>
    </location>
    <ligand>
        <name>[4Fe-4S] cluster</name>
        <dbReference type="ChEBI" id="CHEBI:49883"/>
        <label>1</label>
    </ligand>
</feature>
<feature type="binding site" evidence="1">
    <location>
        <position position="83"/>
    </location>
    <ligand>
        <name>[4Fe-4S] cluster</name>
        <dbReference type="ChEBI" id="CHEBI:49883"/>
        <label>1</label>
    </ligand>
</feature>
<feature type="binding site" evidence="1">
    <location>
        <position position="155"/>
    </location>
    <ligand>
        <name>[4Fe-4S] cluster</name>
        <dbReference type="ChEBI" id="CHEBI:49883"/>
        <label>2</label>
        <note>4Fe-4S-S-AdoMet</note>
    </ligand>
</feature>
<feature type="binding site" evidence="1">
    <location>
        <position position="159"/>
    </location>
    <ligand>
        <name>[4Fe-4S] cluster</name>
        <dbReference type="ChEBI" id="CHEBI:49883"/>
        <label>2</label>
        <note>4Fe-4S-S-AdoMet</note>
    </ligand>
</feature>
<feature type="binding site" evidence="1">
    <location>
        <position position="162"/>
    </location>
    <ligand>
        <name>[4Fe-4S] cluster</name>
        <dbReference type="ChEBI" id="CHEBI:49883"/>
        <label>2</label>
        <note>4Fe-4S-S-AdoMet</note>
    </ligand>
</feature>
<gene>
    <name evidence="1" type="primary">rimO</name>
    <name type="ordered locus">Anae109_0094</name>
</gene>
<proteinExistence type="inferred from homology"/>
<evidence type="ECO:0000255" key="1">
    <source>
        <dbReference type="HAMAP-Rule" id="MF_01865"/>
    </source>
</evidence>
<evidence type="ECO:0000255" key="2">
    <source>
        <dbReference type="PROSITE-ProRule" id="PRU01266"/>
    </source>
</evidence>
<evidence type="ECO:0000256" key="3">
    <source>
        <dbReference type="SAM" id="MobiDB-lite"/>
    </source>
</evidence>
<sequence length="470" mass="51797">MATTRVYLHTLGCPKNRVDSEVMLGTLTGAGYRLERDPAQADVIVVNTCGFIESAKEESVDAIVELAGMKQEGRCKKLVVTGCLVQRHAEELSAELPEVDHFLGTGAYAEIARVVSDAQAKRLVVPDPDFVHSAATPRVNSLPSHTAYLKISEGCDNACAFCIIPKLRGAQRSRPVDDVVAEAAALAAQGTVELSLVAQDLTAYGYDLPGKVRLHHLLPELCKVDGIRWLRLHYAYPRDVPDALVEVIAREPKIVKYLDMPLQHSSDRLLRSMKRGRDSVFLRELLARLRARVPGIALRTSLIVGLPGETEEDFEDLVRFVEEQRFERLGVFEFSPEDGTPAADMAEQVPDVVKRARRDRIMALQQEISREHQRAMVGRRLEVLVEGRAEETEHLLAGRHAQQAPEIDGITYVNDGVAYPGELVTVEITDASEYDLVGHVVARDPERARRPLPAPAGGETPRRGGLPVVG</sequence>
<accession>A7H6G8</accession>
<keyword id="KW-0004">4Fe-4S</keyword>
<keyword id="KW-0963">Cytoplasm</keyword>
<keyword id="KW-0408">Iron</keyword>
<keyword id="KW-0411">Iron-sulfur</keyword>
<keyword id="KW-0479">Metal-binding</keyword>
<keyword id="KW-1185">Reference proteome</keyword>
<keyword id="KW-0949">S-adenosyl-L-methionine</keyword>
<keyword id="KW-0808">Transferase</keyword>
<dbReference type="EC" id="2.8.4.4" evidence="1"/>
<dbReference type="EMBL" id="CP000769">
    <property type="protein sequence ID" value="ABS24314.1"/>
    <property type="molecule type" value="Genomic_DNA"/>
</dbReference>
<dbReference type="RefSeq" id="WP_011984420.1">
    <property type="nucleotide sequence ID" value="NC_009675.1"/>
</dbReference>
<dbReference type="SMR" id="A7H6G8"/>
<dbReference type="STRING" id="404589.Anae109_0094"/>
<dbReference type="KEGG" id="afw:Anae109_0094"/>
<dbReference type="eggNOG" id="COG0621">
    <property type="taxonomic scope" value="Bacteria"/>
</dbReference>
<dbReference type="HOGENOM" id="CLU_018697_0_1_7"/>
<dbReference type="OrthoDB" id="9805215at2"/>
<dbReference type="Proteomes" id="UP000006382">
    <property type="component" value="Chromosome"/>
</dbReference>
<dbReference type="GO" id="GO:0005829">
    <property type="term" value="C:cytosol"/>
    <property type="evidence" value="ECO:0007669"/>
    <property type="project" value="TreeGrafter"/>
</dbReference>
<dbReference type="GO" id="GO:0051539">
    <property type="term" value="F:4 iron, 4 sulfur cluster binding"/>
    <property type="evidence" value="ECO:0007669"/>
    <property type="project" value="UniProtKB-UniRule"/>
</dbReference>
<dbReference type="GO" id="GO:0035599">
    <property type="term" value="F:aspartic acid methylthiotransferase activity"/>
    <property type="evidence" value="ECO:0007669"/>
    <property type="project" value="TreeGrafter"/>
</dbReference>
<dbReference type="GO" id="GO:0046872">
    <property type="term" value="F:metal ion binding"/>
    <property type="evidence" value="ECO:0007669"/>
    <property type="project" value="UniProtKB-KW"/>
</dbReference>
<dbReference type="GO" id="GO:0103039">
    <property type="term" value="F:protein methylthiotransferase activity"/>
    <property type="evidence" value="ECO:0007669"/>
    <property type="project" value="UniProtKB-EC"/>
</dbReference>
<dbReference type="GO" id="GO:0006400">
    <property type="term" value="P:tRNA modification"/>
    <property type="evidence" value="ECO:0007669"/>
    <property type="project" value="InterPro"/>
</dbReference>
<dbReference type="CDD" id="cd01335">
    <property type="entry name" value="Radical_SAM"/>
    <property type="match status" value="1"/>
</dbReference>
<dbReference type="FunFam" id="3.40.50.12160:FF:000003">
    <property type="entry name" value="CDK5 regulatory subunit-associated protein 1"/>
    <property type="match status" value="1"/>
</dbReference>
<dbReference type="FunFam" id="3.80.30.20:FF:000001">
    <property type="entry name" value="tRNA-2-methylthio-N(6)-dimethylallyladenosine synthase 2"/>
    <property type="match status" value="1"/>
</dbReference>
<dbReference type="Gene3D" id="3.40.50.12160">
    <property type="entry name" value="Methylthiotransferase, N-terminal domain"/>
    <property type="match status" value="1"/>
</dbReference>
<dbReference type="Gene3D" id="2.40.50.140">
    <property type="entry name" value="Nucleic acid-binding proteins"/>
    <property type="match status" value="1"/>
</dbReference>
<dbReference type="Gene3D" id="3.80.30.20">
    <property type="entry name" value="tm_1862 like domain"/>
    <property type="match status" value="1"/>
</dbReference>
<dbReference type="HAMAP" id="MF_01865">
    <property type="entry name" value="MTTase_RimO"/>
    <property type="match status" value="1"/>
</dbReference>
<dbReference type="InterPro" id="IPR006638">
    <property type="entry name" value="Elp3/MiaA/NifB-like_rSAM"/>
</dbReference>
<dbReference type="InterPro" id="IPR005839">
    <property type="entry name" value="Methylthiotransferase"/>
</dbReference>
<dbReference type="InterPro" id="IPR020612">
    <property type="entry name" value="Methylthiotransferase_CS"/>
</dbReference>
<dbReference type="InterPro" id="IPR013848">
    <property type="entry name" value="Methylthiotransferase_N"/>
</dbReference>
<dbReference type="InterPro" id="IPR038135">
    <property type="entry name" value="Methylthiotransferase_N_sf"/>
</dbReference>
<dbReference type="InterPro" id="IPR012340">
    <property type="entry name" value="NA-bd_OB-fold"/>
</dbReference>
<dbReference type="InterPro" id="IPR005840">
    <property type="entry name" value="Ribosomal_uS12_MeSTrfase_RimO"/>
</dbReference>
<dbReference type="InterPro" id="IPR007197">
    <property type="entry name" value="rSAM"/>
</dbReference>
<dbReference type="InterPro" id="IPR023404">
    <property type="entry name" value="rSAM_horseshoe"/>
</dbReference>
<dbReference type="InterPro" id="IPR002792">
    <property type="entry name" value="TRAM_dom"/>
</dbReference>
<dbReference type="NCBIfam" id="TIGR01125">
    <property type="entry name" value="30S ribosomal protein S12 methylthiotransferase RimO"/>
    <property type="match status" value="1"/>
</dbReference>
<dbReference type="NCBIfam" id="TIGR00089">
    <property type="entry name" value="MiaB/RimO family radical SAM methylthiotransferase"/>
    <property type="match status" value="1"/>
</dbReference>
<dbReference type="PANTHER" id="PTHR43837">
    <property type="entry name" value="RIBOSOMAL PROTEIN S12 METHYLTHIOTRANSFERASE RIMO"/>
    <property type="match status" value="1"/>
</dbReference>
<dbReference type="PANTHER" id="PTHR43837:SF1">
    <property type="entry name" value="RIBOSOMAL PROTEIN US12 METHYLTHIOTRANSFERASE RIMO"/>
    <property type="match status" value="1"/>
</dbReference>
<dbReference type="Pfam" id="PF04055">
    <property type="entry name" value="Radical_SAM"/>
    <property type="match status" value="1"/>
</dbReference>
<dbReference type="Pfam" id="PF18693">
    <property type="entry name" value="TRAM_2"/>
    <property type="match status" value="1"/>
</dbReference>
<dbReference type="Pfam" id="PF00919">
    <property type="entry name" value="UPF0004"/>
    <property type="match status" value="1"/>
</dbReference>
<dbReference type="SFLD" id="SFLDG01082">
    <property type="entry name" value="B12-binding_domain_containing"/>
    <property type="match status" value="1"/>
</dbReference>
<dbReference type="SFLD" id="SFLDG01061">
    <property type="entry name" value="methylthiotransferase"/>
    <property type="match status" value="1"/>
</dbReference>
<dbReference type="SFLD" id="SFLDF00274">
    <property type="entry name" value="ribosomal_protein_S12_methylth"/>
    <property type="match status" value="1"/>
</dbReference>
<dbReference type="SMART" id="SM00729">
    <property type="entry name" value="Elp3"/>
    <property type="match status" value="1"/>
</dbReference>
<dbReference type="SUPFAM" id="SSF102114">
    <property type="entry name" value="Radical SAM enzymes"/>
    <property type="match status" value="1"/>
</dbReference>
<dbReference type="PROSITE" id="PS51449">
    <property type="entry name" value="MTTASE_N"/>
    <property type="match status" value="1"/>
</dbReference>
<dbReference type="PROSITE" id="PS01278">
    <property type="entry name" value="MTTASE_RADICAL"/>
    <property type="match status" value="1"/>
</dbReference>
<dbReference type="PROSITE" id="PS51918">
    <property type="entry name" value="RADICAL_SAM"/>
    <property type="match status" value="1"/>
</dbReference>
<dbReference type="PROSITE" id="PS50926">
    <property type="entry name" value="TRAM"/>
    <property type="match status" value="1"/>
</dbReference>
<name>RIMO_ANADF</name>